<comment type="function">
    <text evidence="1">This protein binds to 23S rRNA in the presence of protein L20.</text>
</comment>
<comment type="subunit">
    <text evidence="1">Part of the 50S ribosomal subunit. Contacts protein L20.</text>
</comment>
<comment type="similarity">
    <text evidence="1">Belongs to the bacterial ribosomal protein bL21 family.</text>
</comment>
<dbReference type="EMBL" id="CP000490">
    <property type="protein sequence ID" value="ABL72169.1"/>
    <property type="molecule type" value="Genomic_DNA"/>
</dbReference>
<dbReference type="RefSeq" id="WP_011750337.1">
    <property type="nucleotide sequence ID" value="NC_008687.1"/>
</dbReference>
<dbReference type="SMR" id="A1B9H5"/>
<dbReference type="STRING" id="318586.Pden_4103"/>
<dbReference type="EnsemblBacteria" id="ABL72169">
    <property type="protein sequence ID" value="ABL72169"/>
    <property type="gene ID" value="Pden_4103"/>
</dbReference>
<dbReference type="GeneID" id="93453770"/>
<dbReference type="KEGG" id="pde:Pden_4103"/>
<dbReference type="eggNOG" id="COG0261">
    <property type="taxonomic scope" value="Bacteria"/>
</dbReference>
<dbReference type="HOGENOM" id="CLU_061463_1_2_5"/>
<dbReference type="OrthoDB" id="9813334at2"/>
<dbReference type="Proteomes" id="UP000000361">
    <property type="component" value="Chromosome 2"/>
</dbReference>
<dbReference type="GO" id="GO:0005737">
    <property type="term" value="C:cytoplasm"/>
    <property type="evidence" value="ECO:0007669"/>
    <property type="project" value="UniProtKB-ARBA"/>
</dbReference>
<dbReference type="GO" id="GO:1990904">
    <property type="term" value="C:ribonucleoprotein complex"/>
    <property type="evidence" value="ECO:0007669"/>
    <property type="project" value="UniProtKB-KW"/>
</dbReference>
<dbReference type="GO" id="GO:0005840">
    <property type="term" value="C:ribosome"/>
    <property type="evidence" value="ECO:0007669"/>
    <property type="project" value="UniProtKB-KW"/>
</dbReference>
<dbReference type="GO" id="GO:0019843">
    <property type="term" value="F:rRNA binding"/>
    <property type="evidence" value="ECO:0007669"/>
    <property type="project" value="UniProtKB-UniRule"/>
</dbReference>
<dbReference type="GO" id="GO:0003735">
    <property type="term" value="F:structural constituent of ribosome"/>
    <property type="evidence" value="ECO:0007669"/>
    <property type="project" value="InterPro"/>
</dbReference>
<dbReference type="GO" id="GO:0006412">
    <property type="term" value="P:translation"/>
    <property type="evidence" value="ECO:0007669"/>
    <property type="project" value="UniProtKB-UniRule"/>
</dbReference>
<dbReference type="HAMAP" id="MF_01363">
    <property type="entry name" value="Ribosomal_bL21"/>
    <property type="match status" value="1"/>
</dbReference>
<dbReference type="InterPro" id="IPR028909">
    <property type="entry name" value="bL21-like"/>
</dbReference>
<dbReference type="InterPro" id="IPR036164">
    <property type="entry name" value="bL21-like_sf"/>
</dbReference>
<dbReference type="InterPro" id="IPR001787">
    <property type="entry name" value="Ribosomal_bL21"/>
</dbReference>
<dbReference type="NCBIfam" id="TIGR00061">
    <property type="entry name" value="L21"/>
    <property type="match status" value="1"/>
</dbReference>
<dbReference type="PANTHER" id="PTHR21349">
    <property type="entry name" value="50S RIBOSOMAL PROTEIN L21"/>
    <property type="match status" value="1"/>
</dbReference>
<dbReference type="PANTHER" id="PTHR21349:SF0">
    <property type="entry name" value="LARGE RIBOSOMAL SUBUNIT PROTEIN BL21M"/>
    <property type="match status" value="1"/>
</dbReference>
<dbReference type="Pfam" id="PF00829">
    <property type="entry name" value="Ribosomal_L21p"/>
    <property type="match status" value="1"/>
</dbReference>
<dbReference type="SUPFAM" id="SSF141091">
    <property type="entry name" value="L21p-like"/>
    <property type="match status" value="1"/>
</dbReference>
<proteinExistence type="inferred from homology"/>
<sequence>MFAVLKTGGKQYRVQAGDVLRVEKLNAEAGDKVQFNDVLMIGSAVGAPLVAGAAVQAEVIDTIKADKVITYVKRRRKHSSQRTRGHRQQLTLVRITDLLEKGGDKSGVKPAVGARTKIEPAVKPAKAKKSEAEASAEDAN</sequence>
<accession>A1B9H5</accession>
<gene>
    <name evidence="1" type="primary">rplU</name>
    <name type="ordered locus">Pden_4103</name>
</gene>
<feature type="chain" id="PRO_1000067867" description="Large ribosomal subunit protein bL21">
    <location>
        <begin position="1"/>
        <end position="140"/>
    </location>
</feature>
<feature type="region of interest" description="Disordered" evidence="2">
    <location>
        <begin position="106"/>
        <end position="140"/>
    </location>
</feature>
<name>RL21_PARDP</name>
<organism>
    <name type="scientific">Paracoccus denitrificans (strain Pd 1222)</name>
    <dbReference type="NCBI Taxonomy" id="318586"/>
    <lineage>
        <taxon>Bacteria</taxon>
        <taxon>Pseudomonadati</taxon>
        <taxon>Pseudomonadota</taxon>
        <taxon>Alphaproteobacteria</taxon>
        <taxon>Rhodobacterales</taxon>
        <taxon>Paracoccaceae</taxon>
        <taxon>Paracoccus</taxon>
    </lineage>
</organism>
<reference key="1">
    <citation type="submission" date="2006-12" db="EMBL/GenBank/DDBJ databases">
        <title>Complete sequence of chromosome 2 of Paracoccus denitrificans PD1222.</title>
        <authorList>
            <person name="Copeland A."/>
            <person name="Lucas S."/>
            <person name="Lapidus A."/>
            <person name="Barry K."/>
            <person name="Detter J.C."/>
            <person name="Glavina del Rio T."/>
            <person name="Hammon N."/>
            <person name="Israni S."/>
            <person name="Dalin E."/>
            <person name="Tice H."/>
            <person name="Pitluck S."/>
            <person name="Munk A.C."/>
            <person name="Brettin T."/>
            <person name="Bruce D."/>
            <person name="Han C."/>
            <person name="Tapia R."/>
            <person name="Gilna P."/>
            <person name="Schmutz J."/>
            <person name="Larimer F."/>
            <person name="Land M."/>
            <person name="Hauser L."/>
            <person name="Kyrpides N."/>
            <person name="Lykidis A."/>
            <person name="Spiro S."/>
            <person name="Richardson D.J."/>
            <person name="Moir J.W.B."/>
            <person name="Ferguson S.J."/>
            <person name="van Spanning R.J.M."/>
            <person name="Richardson P."/>
        </authorList>
    </citation>
    <scope>NUCLEOTIDE SEQUENCE [LARGE SCALE GENOMIC DNA]</scope>
    <source>
        <strain>Pd 1222</strain>
    </source>
</reference>
<keyword id="KW-1185">Reference proteome</keyword>
<keyword id="KW-0687">Ribonucleoprotein</keyword>
<keyword id="KW-0689">Ribosomal protein</keyword>
<keyword id="KW-0694">RNA-binding</keyword>
<keyword id="KW-0699">rRNA-binding</keyword>
<evidence type="ECO:0000255" key="1">
    <source>
        <dbReference type="HAMAP-Rule" id="MF_01363"/>
    </source>
</evidence>
<evidence type="ECO:0000256" key="2">
    <source>
        <dbReference type="SAM" id="MobiDB-lite"/>
    </source>
</evidence>
<evidence type="ECO:0000305" key="3"/>
<protein>
    <recommendedName>
        <fullName evidence="1">Large ribosomal subunit protein bL21</fullName>
    </recommendedName>
    <alternativeName>
        <fullName evidence="3">50S ribosomal protein L21</fullName>
    </alternativeName>
</protein>